<organism>
    <name type="scientific">Leuconostoc mesenteroides subsp. cremoris</name>
    <dbReference type="NCBI Taxonomy" id="33965"/>
    <lineage>
        <taxon>Bacteria</taxon>
        <taxon>Bacillati</taxon>
        <taxon>Bacillota</taxon>
        <taxon>Bacilli</taxon>
        <taxon>Lactobacillales</taxon>
        <taxon>Lactobacillaceae</taxon>
        <taxon>Leuconostoc</taxon>
    </lineage>
</organism>
<sequence>MSKKVVSTTTAPKALGPYSQAILNDNTLYISGQIGIDPETDEFAGATTAEQAHQIFDNIDNILHEAEFSRNDIVKAALFFDDIADFALVNDIYAQYFDTTSVEEFPARSAVQVAALPKNAKLEIEITAMK</sequence>
<reference key="1">
    <citation type="submission" date="1996-03" db="EMBL/GenBank/DDBJ databases">
        <authorList>
            <person name="Cavin J.F."/>
            <person name="Dartois V.A."/>
            <person name="Divies C."/>
        </authorList>
    </citation>
    <scope>NUCLEOTIDE SEQUENCE [GENOMIC DNA]</scope>
</reference>
<name>Y142_LEUMC</name>
<proteinExistence type="inferred from homology"/>
<comment type="similarity">
    <text evidence="1">Belongs to the RutC family.</text>
</comment>
<evidence type="ECO:0000305" key="1"/>
<feature type="chain" id="PRO_0000170342" description="RutC family protein in leuC 5'region">
    <location>
        <begin position="1"/>
        <end position="130"/>
    </location>
</feature>
<accession>P97117</accession>
<dbReference type="EMBL" id="U50749">
    <property type="protein sequence ID" value="AAB48552.1"/>
    <property type="molecule type" value="Genomic_DNA"/>
</dbReference>
<dbReference type="RefSeq" id="WP_002815709.1">
    <property type="nucleotide sequence ID" value="NZ_MPEJ01000095.1"/>
</dbReference>
<dbReference type="SMR" id="P97117"/>
<dbReference type="GeneID" id="29575833"/>
<dbReference type="PATRIC" id="fig|33965.3.peg.673"/>
<dbReference type="GO" id="GO:0005829">
    <property type="term" value="C:cytosol"/>
    <property type="evidence" value="ECO:0007669"/>
    <property type="project" value="TreeGrafter"/>
</dbReference>
<dbReference type="GO" id="GO:0019239">
    <property type="term" value="F:deaminase activity"/>
    <property type="evidence" value="ECO:0007669"/>
    <property type="project" value="TreeGrafter"/>
</dbReference>
<dbReference type="CDD" id="cd00448">
    <property type="entry name" value="YjgF_YER057c_UK114_family"/>
    <property type="match status" value="1"/>
</dbReference>
<dbReference type="FunFam" id="3.30.1330.40:FF:000001">
    <property type="entry name" value="L-PSP family endoribonuclease"/>
    <property type="match status" value="1"/>
</dbReference>
<dbReference type="Gene3D" id="3.30.1330.40">
    <property type="entry name" value="RutC-like"/>
    <property type="match status" value="1"/>
</dbReference>
<dbReference type="InterPro" id="IPR006056">
    <property type="entry name" value="RidA"/>
</dbReference>
<dbReference type="InterPro" id="IPR019897">
    <property type="entry name" value="RidA_CS"/>
</dbReference>
<dbReference type="InterPro" id="IPR035959">
    <property type="entry name" value="RutC-like_sf"/>
</dbReference>
<dbReference type="InterPro" id="IPR006175">
    <property type="entry name" value="YjgF/YER057c/UK114"/>
</dbReference>
<dbReference type="NCBIfam" id="TIGR00004">
    <property type="entry name" value="Rid family detoxifying hydrolase"/>
    <property type="match status" value="1"/>
</dbReference>
<dbReference type="PANTHER" id="PTHR11803">
    <property type="entry name" value="2-IMINOBUTANOATE/2-IMINOPROPANOATE DEAMINASE RIDA"/>
    <property type="match status" value="1"/>
</dbReference>
<dbReference type="PANTHER" id="PTHR11803:SF39">
    <property type="entry name" value="2-IMINOBUTANOATE_2-IMINOPROPANOATE DEAMINASE"/>
    <property type="match status" value="1"/>
</dbReference>
<dbReference type="Pfam" id="PF01042">
    <property type="entry name" value="Ribonuc_L-PSP"/>
    <property type="match status" value="1"/>
</dbReference>
<dbReference type="SUPFAM" id="SSF55298">
    <property type="entry name" value="YjgF-like"/>
    <property type="match status" value="1"/>
</dbReference>
<dbReference type="PROSITE" id="PS01094">
    <property type="entry name" value="UPF0076"/>
    <property type="match status" value="1"/>
</dbReference>
<protein>
    <recommendedName>
        <fullName>RutC family protein in leuC 5'region</fullName>
    </recommendedName>
</protein>